<organism>
    <name type="scientific">Methylobacterium sp. (strain 4-46)</name>
    <dbReference type="NCBI Taxonomy" id="426117"/>
    <lineage>
        <taxon>Bacteria</taxon>
        <taxon>Pseudomonadati</taxon>
        <taxon>Pseudomonadota</taxon>
        <taxon>Alphaproteobacteria</taxon>
        <taxon>Hyphomicrobiales</taxon>
        <taxon>Methylobacteriaceae</taxon>
        <taxon>Methylobacterium</taxon>
    </lineage>
</organism>
<accession>B0UI86</accession>
<evidence type="ECO:0000255" key="1">
    <source>
        <dbReference type="HAMAP-Rule" id="MF_00236"/>
    </source>
</evidence>
<evidence type="ECO:0000256" key="2">
    <source>
        <dbReference type="SAM" id="MobiDB-lite"/>
    </source>
</evidence>
<keyword id="KW-0997">Cell inner membrane</keyword>
<keyword id="KW-1003">Cell membrane</keyword>
<keyword id="KW-0472">Membrane</keyword>
<keyword id="KW-0653">Protein transport</keyword>
<keyword id="KW-0811">Translocation</keyword>
<keyword id="KW-0812">Transmembrane</keyword>
<keyword id="KW-1133">Transmembrane helix</keyword>
<keyword id="KW-0813">Transport</keyword>
<name>TATA_METS4</name>
<protein>
    <recommendedName>
        <fullName evidence="1">Sec-independent protein translocase protein TatA</fullName>
    </recommendedName>
</protein>
<feature type="chain" id="PRO_1000197882" description="Sec-independent protein translocase protein TatA">
    <location>
        <begin position="1"/>
        <end position="88"/>
    </location>
</feature>
<feature type="transmembrane region" description="Helical" evidence="1">
    <location>
        <begin position="1"/>
        <end position="21"/>
    </location>
</feature>
<feature type="region of interest" description="Disordered" evidence="2">
    <location>
        <begin position="62"/>
        <end position="88"/>
    </location>
</feature>
<gene>
    <name evidence="1" type="primary">tatA</name>
    <name type="ordered locus">M446_2485</name>
</gene>
<sequence length="88" mass="9276">MGGASIWHWIVVGVIVMLLFGRGKVSELMGDVAKGIKAFKKGMADEDQPQAPVVAAPPVTATEPVRTLPPHPTEPAPATHATVDRKVV</sequence>
<reference key="1">
    <citation type="submission" date="2008-02" db="EMBL/GenBank/DDBJ databases">
        <title>Complete sequence of chromosome of Methylobacterium sp. 4-46.</title>
        <authorList>
            <consortium name="US DOE Joint Genome Institute"/>
            <person name="Copeland A."/>
            <person name="Lucas S."/>
            <person name="Lapidus A."/>
            <person name="Glavina del Rio T."/>
            <person name="Dalin E."/>
            <person name="Tice H."/>
            <person name="Bruce D."/>
            <person name="Goodwin L."/>
            <person name="Pitluck S."/>
            <person name="Chertkov O."/>
            <person name="Brettin T."/>
            <person name="Detter J.C."/>
            <person name="Han C."/>
            <person name="Kuske C.R."/>
            <person name="Schmutz J."/>
            <person name="Larimer F."/>
            <person name="Land M."/>
            <person name="Hauser L."/>
            <person name="Kyrpides N."/>
            <person name="Ivanova N."/>
            <person name="Marx C.J."/>
            <person name="Richardson P."/>
        </authorList>
    </citation>
    <scope>NUCLEOTIDE SEQUENCE [LARGE SCALE GENOMIC DNA]</scope>
    <source>
        <strain>4-46</strain>
    </source>
</reference>
<dbReference type="EMBL" id="CP000943">
    <property type="protein sequence ID" value="ACA16937.1"/>
    <property type="molecule type" value="Genomic_DNA"/>
</dbReference>
<dbReference type="RefSeq" id="WP_012332344.1">
    <property type="nucleotide sequence ID" value="NC_010511.1"/>
</dbReference>
<dbReference type="SMR" id="B0UI86"/>
<dbReference type="STRING" id="426117.M446_2485"/>
<dbReference type="KEGG" id="met:M446_2485"/>
<dbReference type="eggNOG" id="COG1826">
    <property type="taxonomic scope" value="Bacteria"/>
</dbReference>
<dbReference type="HOGENOM" id="CLU_086034_5_0_5"/>
<dbReference type="GO" id="GO:0033281">
    <property type="term" value="C:TAT protein transport complex"/>
    <property type="evidence" value="ECO:0007669"/>
    <property type="project" value="UniProtKB-UniRule"/>
</dbReference>
<dbReference type="GO" id="GO:0008320">
    <property type="term" value="F:protein transmembrane transporter activity"/>
    <property type="evidence" value="ECO:0007669"/>
    <property type="project" value="UniProtKB-UniRule"/>
</dbReference>
<dbReference type="GO" id="GO:0043953">
    <property type="term" value="P:protein transport by the Tat complex"/>
    <property type="evidence" value="ECO:0007669"/>
    <property type="project" value="UniProtKB-UniRule"/>
</dbReference>
<dbReference type="Gene3D" id="1.20.5.3310">
    <property type="match status" value="1"/>
</dbReference>
<dbReference type="HAMAP" id="MF_00236">
    <property type="entry name" value="TatA_E"/>
    <property type="match status" value="1"/>
</dbReference>
<dbReference type="InterPro" id="IPR003369">
    <property type="entry name" value="TatA/B/E"/>
</dbReference>
<dbReference type="InterPro" id="IPR006312">
    <property type="entry name" value="TatA/E"/>
</dbReference>
<dbReference type="NCBIfam" id="NF001940">
    <property type="entry name" value="PRK00720.1"/>
    <property type="match status" value="1"/>
</dbReference>
<dbReference type="NCBIfam" id="TIGR01411">
    <property type="entry name" value="tatAE"/>
    <property type="match status" value="1"/>
</dbReference>
<dbReference type="PANTHER" id="PTHR42982">
    <property type="entry name" value="SEC-INDEPENDENT PROTEIN TRANSLOCASE PROTEIN TATA"/>
    <property type="match status" value="1"/>
</dbReference>
<dbReference type="PANTHER" id="PTHR42982:SF1">
    <property type="entry name" value="SEC-INDEPENDENT PROTEIN TRANSLOCASE PROTEIN TATA"/>
    <property type="match status" value="1"/>
</dbReference>
<dbReference type="Pfam" id="PF02416">
    <property type="entry name" value="TatA_B_E"/>
    <property type="match status" value="1"/>
</dbReference>
<comment type="function">
    <text evidence="1">Part of the twin-arginine translocation (Tat) system that transports large folded proteins containing a characteristic twin-arginine motif in their signal peptide across membranes. TatA could form the protein-conducting channel of the Tat system.</text>
</comment>
<comment type="subunit">
    <text evidence="1">The Tat system comprises two distinct complexes: a TatABC complex, containing multiple copies of TatA, TatB and TatC subunits, and a separate TatA complex, containing only TatA subunits. Substrates initially bind to the TatABC complex, which probably triggers association of the separate TatA complex to form the active translocon.</text>
</comment>
<comment type="subcellular location">
    <subcellularLocation>
        <location evidence="1">Cell inner membrane</location>
        <topology evidence="1">Single-pass membrane protein</topology>
    </subcellularLocation>
</comment>
<comment type="similarity">
    <text evidence="1">Belongs to the TatA/E family.</text>
</comment>
<proteinExistence type="inferred from homology"/>